<accession>Q2YJQ4</accession>
<reference key="1">
    <citation type="journal article" date="2005" name="Infect. Immun.">
        <title>Whole-genome analyses of speciation events in pathogenic Brucellae.</title>
        <authorList>
            <person name="Chain P.S."/>
            <person name="Comerci D.J."/>
            <person name="Tolmasky M.E."/>
            <person name="Larimer F.W."/>
            <person name="Malfatti S.A."/>
            <person name="Vergez L.M."/>
            <person name="Aguero F."/>
            <person name="Land M.L."/>
            <person name="Ugalde R.A."/>
            <person name="Garcia E."/>
        </authorList>
    </citation>
    <scope>NUCLEOTIDE SEQUENCE [LARGE SCALE GENOMIC DNA]</scope>
    <source>
        <strain>2308</strain>
    </source>
</reference>
<organism>
    <name type="scientific">Brucella abortus (strain 2308)</name>
    <dbReference type="NCBI Taxonomy" id="359391"/>
    <lineage>
        <taxon>Bacteria</taxon>
        <taxon>Pseudomonadati</taxon>
        <taxon>Pseudomonadota</taxon>
        <taxon>Alphaproteobacteria</taxon>
        <taxon>Hyphomicrobiales</taxon>
        <taxon>Brucellaceae</taxon>
        <taxon>Brucella/Ochrobactrum group</taxon>
        <taxon>Brucella</taxon>
    </lineage>
</organism>
<name>TRUA_BRUA2</name>
<sequence>MPRYKLTVEYDGTPYVGWQRQENGHAVQGAIEQAFKKFCGEDLTLSAAGRTDAGVHATAQVAHVDLAKDWGAGKVRDAVNAHLVMADERISILNVEKTTDTFDARFSARARHYLYRIHNRRAPLAVDYQRAWWVQKQLDADAMHEAAQRLLGEHDFTTFRATQCQAKSPVKTLDRLDVTRNGDMVEMRVSARSFLHNQVRSFAGSLMEVGVGRWTADDLQAALEARDRKACGQVAPPYGLYLVGVDYAFPF</sequence>
<comment type="function">
    <text evidence="1">Formation of pseudouridine at positions 38, 39 and 40 in the anticodon stem and loop of transfer RNAs.</text>
</comment>
<comment type="catalytic activity">
    <reaction evidence="1">
        <text>uridine(38/39/40) in tRNA = pseudouridine(38/39/40) in tRNA</text>
        <dbReference type="Rhea" id="RHEA:22376"/>
        <dbReference type="Rhea" id="RHEA-COMP:10085"/>
        <dbReference type="Rhea" id="RHEA-COMP:10087"/>
        <dbReference type="ChEBI" id="CHEBI:65314"/>
        <dbReference type="ChEBI" id="CHEBI:65315"/>
        <dbReference type="EC" id="5.4.99.12"/>
    </reaction>
</comment>
<comment type="subunit">
    <text evidence="1">Homodimer.</text>
</comment>
<comment type="similarity">
    <text evidence="1">Belongs to the tRNA pseudouridine synthase TruA family.</text>
</comment>
<protein>
    <recommendedName>
        <fullName evidence="1">tRNA pseudouridine synthase A</fullName>
        <ecNumber evidence="1">5.4.99.12</ecNumber>
    </recommendedName>
    <alternativeName>
        <fullName evidence="1">tRNA pseudouridine(38-40) synthase</fullName>
    </alternativeName>
    <alternativeName>
        <fullName evidence="1">tRNA pseudouridylate synthase I</fullName>
    </alternativeName>
    <alternativeName>
        <fullName evidence="1">tRNA-uridine isomerase I</fullName>
    </alternativeName>
</protein>
<proteinExistence type="inferred from homology"/>
<dbReference type="EC" id="5.4.99.12" evidence="1"/>
<dbReference type="EMBL" id="AM040265">
    <property type="protein sequence ID" value="CAJ13161.1"/>
    <property type="molecule type" value="Genomic_DNA"/>
</dbReference>
<dbReference type="RefSeq" id="WP_002965618.1">
    <property type="nucleotide sequence ID" value="NZ_KN046823.1"/>
</dbReference>
<dbReference type="SMR" id="Q2YJQ4"/>
<dbReference type="STRING" id="359391.BAB2_0995"/>
<dbReference type="GeneID" id="97534918"/>
<dbReference type="KEGG" id="bmf:BAB2_0995"/>
<dbReference type="PATRIC" id="fig|359391.11.peg.682"/>
<dbReference type="HOGENOM" id="CLU_014673_0_2_5"/>
<dbReference type="PhylomeDB" id="Q2YJQ4"/>
<dbReference type="Proteomes" id="UP000002719">
    <property type="component" value="Chromosome II"/>
</dbReference>
<dbReference type="GO" id="GO:0003723">
    <property type="term" value="F:RNA binding"/>
    <property type="evidence" value="ECO:0007669"/>
    <property type="project" value="InterPro"/>
</dbReference>
<dbReference type="GO" id="GO:0160147">
    <property type="term" value="F:tRNA pseudouridine(38-40) synthase activity"/>
    <property type="evidence" value="ECO:0007669"/>
    <property type="project" value="UniProtKB-EC"/>
</dbReference>
<dbReference type="GO" id="GO:0031119">
    <property type="term" value="P:tRNA pseudouridine synthesis"/>
    <property type="evidence" value="ECO:0007669"/>
    <property type="project" value="UniProtKB-UniRule"/>
</dbReference>
<dbReference type="CDD" id="cd02570">
    <property type="entry name" value="PseudoU_synth_EcTruA"/>
    <property type="match status" value="1"/>
</dbReference>
<dbReference type="FunFam" id="3.30.70.580:FF:000001">
    <property type="entry name" value="tRNA pseudouridine synthase A"/>
    <property type="match status" value="1"/>
</dbReference>
<dbReference type="Gene3D" id="3.30.70.660">
    <property type="entry name" value="Pseudouridine synthase I, catalytic domain, C-terminal subdomain"/>
    <property type="match status" value="1"/>
</dbReference>
<dbReference type="Gene3D" id="3.30.70.580">
    <property type="entry name" value="Pseudouridine synthase I, catalytic domain, N-terminal subdomain"/>
    <property type="match status" value="1"/>
</dbReference>
<dbReference type="HAMAP" id="MF_00171">
    <property type="entry name" value="TruA"/>
    <property type="match status" value="1"/>
</dbReference>
<dbReference type="InterPro" id="IPR020103">
    <property type="entry name" value="PsdUridine_synth_cat_dom_sf"/>
</dbReference>
<dbReference type="InterPro" id="IPR001406">
    <property type="entry name" value="PsdUridine_synth_TruA"/>
</dbReference>
<dbReference type="InterPro" id="IPR020097">
    <property type="entry name" value="PsdUridine_synth_TruA_a/b_dom"/>
</dbReference>
<dbReference type="InterPro" id="IPR020095">
    <property type="entry name" value="PsdUridine_synth_TruA_C"/>
</dbReference>
<dbReference type="InterPro" id="IPR020094">
    <property type="entry name" value="TruA/RsuA/RluB/E/F_N"/>
</dbReference>
<dbReference type="NCBIfam" id="TIGR00071">
    <property type="entry name" value="hisT_truA"/>
    <property type="match status" value="1"/>
</dbReference>
<dbReference type="PANTHER" id="PTHR11142">
    <property type="entry name" value="PSEUDOURIDYLATE SYNTHASE"/>
    <property type="match status" value="1"/>
</dbReference>
<dbReference type="PANTHER" id="PTHR11142:SF0">
    <property type="entry name" value="TRNA PSEUDOURIDINE SYNTHASE-LIKE 1"/>
    <property type="match status" value="1"/>
</dbReference>
<dbReference type="Pfam" id="PF01416">
    <property type="entry name" value="PseudoU_synth_1"/>
    <property type="match status" value="2"/>
</dbReference>
<dbReference type="PIRSF" id="PIRSF001430">
    <property type="entry name" value="tRNA_psdUrid_synth"/>
    <property type="match status" value="1"/>
</dbReference>
<dbReference type="SUPFAM" id="SSF55120">
    <property type="entry name" value="Pseudouridine synthase"/>
    <property type="match status" value="1"/>
</dbReference>
<feature type="chain" id="PRO_1000017047" description="tRNA pseudouridine synthase A">
    <location>
        <begin position="1"/>
        <end position="251"/>
    </location>
</feature>
<feature type="active site" description="Nucleophile" evidence="1">
    <location>
        <position position="52"/>
    </location>
</feature>
<feature type="binding site" evidence="1">
    <location>
        <position position="113"/>
    </location>
    <ligand>
        <name>substrate</name>
    </ligand>
</feature>
<evidence type="ECO:0000255" key="1">
    <source>
        <dbReference type="HAMAP-Rule" id="MF_00171"/>
    </source>
</evidence>
<keyword id="KW-0413">Isomerase</keyword>
<keyword id="KW-1185">Reference proteome</keyword>
<keyword id="KW-0819">tRNA processing</keyword>
<gene>
    <name evidence="1" type="primary">truA</name>
    <name type="ordered locus">BAB2_0995</name>
</gene>